<sequence length="779" mass="88665">MTPEFDEEVVFENSPLYQYLQDLGHTDFEICSSLSPKTEKCTTEGQQKPPTRVLPKQGILLKVAETIKSWIFFSQCNKKDDLLHKLDIGFRLDSLHTILQQEVLLQEDVELIELLDPSILSAGQSQQQENGHLPTLCSLATPNIWDLSMLFAFISLLVMLPTWWIVSSWLVWGVILFVYLVIRALRLWRTAKLQVTLKKYSVHLEDMATNSRAFTNLVRKALRLIQETEVISRGFTLVSAACPFNKAGQHPSQHLIGLRKAVYRTLRANFQAARLATLYMLKNYPLNSESDNVTNYICVVPFKELGLGLSEEQISEEEAHNFTDGFSLPALKVLFQLWVAQSSEFFRRLALLLSTANSPPGPLLTPALLPHRILSDVTQGLPHAHSACLEELKRSYEFYRYFETQHQSVPQCLSKTQQKSRELNNVHTAVRSLQLHLKALLNEVIILEDELEKLVCTKETQELVSEAYPILEQKLKLIQPHVQASNNCWEEAISQVDKLLRRNTDKKGKPEIACENPHCTVVPLKQPTLHIADKDPIPEEQELEAYVDDIDIDSDFRKDDFYYLSQEDKERQKREHEESKRVLQELKSVLGFKASEAERQKWKQLLFSDHAVLKSLSPVDPVEPISNSEPSMNSDMGKVSKNDTEEESNKSATTDNEISRTEYLCENSLEGKNKDNSSNEVFPQGAEERMCYQCESEDEPQADGSGLTTAPPTPRDSLQPSIKQRLARLQLSPDFTFTAGLAAEVAARSLSFTTMQEQTFGGEEEEQIIEENKNEIEEK</sequence>
<comment type="function">
    <text evidence="1">Plays a pivotal role in the establishment of adherens junctions and their maintenance in adult life. Required for morphogenesis of the preimplantation embryo, and for the implantation process.</text>
</comment>
<comment type="function">
    <text evidence="5">(Microbial infection) In case of Listeria infection, promotes bacterial internalization by participating in myosin VIIa recruitment to the entry site.</text>
</comment>
<comment type="subunit">
    <text evidence="1 4">Interacts with USH2A (via the cytoplasmic region); the interaction associates VEZT with the USH2 complex at the stereocilia base (By similarity). Interacts with myosin MYO7A and the cadherin-catenins complex (PubMed:11080149).</text>
</comment>
<comment type="subcellular location">
    <subcellularLocation>
        <location evidence="5">Cell membrane</location>
        <topology evidence="12">Multi-pass membrane protein</topology>
    </subcellularLocation>
    <subcellularLocation>
        <location evidence="1">Cell projection</location>
        <location evidence="1">Stereocilium membrane</location>
    </subcellularLocation>
    <subcellularLocation>
        <location evidence="5">Cell junction</location>
        <location evidence="5">Adherens junction</location>
    </subcellularLocation>
    <subcellularLocation>
        <location evidence="1">Nucleus</location>
    </subcellularLocation>
    <subcellularLocation>
        <location evidence="1">Cytoplasmic vesicle</location>
        <location evidence="1">Secretory vesicle</location>
        <location evidence="1">Acrosome</location>
    </subcellularLocation>
</comment>
<comment type="alternative products">
    <event type="alternative splicing"/>
    <isoform>
        <id>Q9HBM0-1</id>
        <name>1</name>
        <sequence type="displayed"/>
    </isoform>
    <isoform>
        <id>Q9HBM0-2</id>
        <name>2</name>
        <sequence type="described" ref="VSP_004010 VSP_004011 VSP_004014 VSP_004017"/>
    </isoform>
    <isoform>
        <id>Q9HBM0-5</id>
        <name>5</name>
        <sequence type="described" ref="VSP_040854 VSP_040855"/>
    </isoform>
    <isoform>
        <id>Q9HBM0-6</id>
        <name>6</name>
        <sequence type="described" ref="VSP_040853 VSP_040856"/>
    </isoform>
    <text>Experimental confirmation may be lacking for some isoforms.</text>
</comment>
<comment type="miscellaneous">
    <molecule>Isoform 2</molecule>
    <text evidence="12">Due to intron retention.</text>
</comment>
<comment type="miscellaneous">
    <molecule>Isoform 5</molecule>
    <text evidence="12">May be produced at very low levels due to a premature stop codon in the mRNA, leading to nonsense-mediated mRNA decay.</text>
</comment>
<comment type="miscellaneous">
    <molecule>Isoform 6</molecule>
    <text evidence="12">May be produced at very low levels due to a premature stop codon in the mRNA, leading to nonsense-mediated mRNA decay.</text>
</comment>
<comment type="similarity">
    <text evidence="12">Belongs to the vezatin family.</text>
</comment>
<comment type="sequence caution" evidence="12">
    <conflict type="miscellaneous discrepancy">
        <sequence resource="EMBL-CDS" id="AAG38514"/>
    </conflict>
    <text>Contaminating sequence. Sequence of unknown origin in the N-terminal part.</text>
</comment>
<comment type="sequence caution" evidence="12">
    <conflict type="erroneous translation">
        <sequence resource="EMBL-CDS" id="AAH64939"/>
    </conflict>
    <text>Wrong choice of CDS.</text>
</comment>
<comment type="sequence caution" evidence="12">
    <conflict type="erroneous translation">
        <sequence resource="EMBL-CDS" id="BAA91634"/>
    </conflict>
    <text>Wrong choice of CDS.</text>
</comment>
<comment type="sequence caution" evidence="12">
    <conflict type="miscellaneous discrepancy">
        <sequence resource="EMBL-CDS" id="CAB70772"/>
    </conflict>
    <text>Intron retention.</text>
</comment>
<name>VEZA_HUMAN</name>
<feature type="chain" id="PRO_0000065783" description="Vezatin">
    <location>
        <begin position="1"/>
        <end position="779"/>
    </location>
</feature>
<feature type="transmembrane region" description="Helical" evidence="2">
    <location>
        <begin position="139"/>
        <end position="159"/>
    </location>
</feature>
<feature type="transmembrane region" description="Helical" evidence="2">
    <location>
        <begin position="162"/>
        <end position="182"/>
    </location>
</feature>
<feature type="region of interest" description="Disordered" evidence="3">
    <location>
        <begin position="618"/>
        <end position="719"/>
    </location>
</feature>
<feature type="region of interest" description="Disordered" evidence="3">
    <location>
        <begin position="757"/>
        <end position="779"/>
    </location>
</feature>
<feature type="coiled-coil region" evidence="2">
    <location>
        <begin position="430"/>
        <end position="462"/>
    </location>
</feature>
<feature type="compositionally biased region" description="Polar residues" evidence="3">
    <location>
        <begin position="625"/>
        <end position="634"/>
    </location>
</feature>
<feature type="compositionally biased region" description="Basic and acidic residues" evidence="3">
    <location>
        <begin position="638"/>
        <end position="649"/>
    </location>
</feature>
<feature type="compositionally biased region" description="Polar residues" evidence="3">
    <location>
        <begin position="706"/>
        <end position="719"/>
    </location>
</feature>
<feature type="compositionally biased region" description="Basic and acidic residues" evidence="3">
    <location>
        <begin position="770"/>
        <end position="779"/>
    </location>
</feature>
<feature type="splice variant" id="VSP_004010" description="In isoform 2." evidence="8 11">
    <location>
        <begin position="1"/>
        <end position="48"/>
    </location>
</feature>
<feature type="splice variant" id="VSP_004011" description="In isoform 2." evidence="8 11">
    <original>PPTRVLP</original>
    <variation>MLKEWAI</variation>
    <location>
        <begin position="49"/>
        <end position="55"/>
    </location>
</feature>
<feature type="splice variant" id="VSP_040853" description="In isoform 6." evidence="10">
    <original>QGILLKVAETIKSWIFFSQCNKK</original>
    <variation>YLGYSNHSMNINCTYWHAQGMGY</variation>
    <location>
        <begin position="57"/>
        <end position="79"/>
    </location>
</feature>
<feature type="splice variant" id="VSP_040854" description="In isoform 5." evidence="9">
    <original>QGILLKVAE</original>
    <variation>GSLSAICLH</variation>
    <location>
        <begin position="57"/>
        <end position="65"/>
    </location>
</feature>
<feature type="splice variant" id="VSP_040855" description="In isoform 5." evidence="9">
    <location>
        <begin position="66"/>
        <end position="779"/>
    </location>
</feature>
<feature type="splice variant" id="VSP_040856" description="In isoform 6." evidence="10">
    <location>
        <begin position="80"/>
        <end position="779"/>
    </location>
</feature>
<feature type="splice variant" id="VSP_004014" description="In isoform 2." evidence="8 11">
    <original>AVLKSLS</original>
    <variation>GVKSAWN</variation>
    <location>
        <begin position="611"/>
        <end position="617"/>
    </location>
</feature>
<feature type="splice variant" id="VSP_004017" description="In isoform 2." evidence="8 11">
    <location>
        <begin position="618"/>
        <end position="779"/>
    </location>
</feature>
<feature type="sequence variant" id="VAR_046303" description="In dbSNP:rs17855933.">
    <original>T</original>
    <variation>A</variation>
    <location>
        <position position="162"/>
    </location>
</feature>
<feature type="sequence variant" id="VAR_046304" description="In dbSNP:rs10507051." evidence="4">
    <original>V</original>
    <variation>I</variation>
    <location>
        <position position="496"/>
    </location>
</feature>
<feature type="sequence variant" id="VAR_046305" description="In dbSNP:rs17344738." evidence="6">
    <original>V</original>
    <variation>M</variation>
    <location>
        <position position="612"/>
    </location>
</feature>
<feature type="sequence variant" id="VAR_046306" description="In dbSNP:rs17855934.">
    <original>S</original>
    <variation>A</variation>
    <location>
        <position position="668"/>
    </location>
</feature>
<feature type="sequence variant" id="VAR_014945" description="In dbSNP:rs14121." evidence="6 7">
    <original>G</original>
    <variation>D</variation>
    <location>
        <position position="762"/>
    </location>
</feature>
<feature type="sequence conflict" description="In Ref. 3; BAA91634." evidence="12" ref="3">
    <original>Q</original>
    <variation>R</variation>
    <location>
        <position position="46"/>
    </location>
</feature>
<feature type="sequence conflict" description="In Ref. 2; AAG38485." evidence="12" ref="2">
    <original>W</original>
    <variation>R</variation>
    <location>
        <position position="169"/>
    </location>
</feature>
<feature type="sequence conflict" description="In Ref. 1; AAG09719." evidence="12" ref="1">
    <original>L</original>
    <variation>W</variation>
    <location>
        <position position="334"/>
    </location>
</feature>
<feature type="sequence conflict" description="In Ref. 1; AAG09719." evidence="12" ref="1">
    <original>Y</original>
    <variation>I</variation>
    <location>
        <position position="396"/>
    </location>
</feature>
<feature type="sequence conflict" description="In Ref. 1; AAG09719." evidence="12" ref="1">
    <original>S</original>
    <variation>T</variation>
    <location>
        <position position="432"/>
    </location>
</feature>
<feature type="sequence conflict" description="In Ref. 1; AAG09719." evidence="12" ref="1">
    <original>S</original>
    <variation>F</variation>
    <location>
        <position position="617"/>
    </location>
</feature>
<protein>
    <recommendedName>
        <fullName>Vezatin</fullName>
    </recommendedName>
</protein>
<reference key="1">
    <citation type="submission" date="2000-01" db="EMBL/GenBank/DDBJ databases">
        <authorList>
            <person name="Xiao H."/>
            <person name="Song H."/>
            <person name="Gao G."/>
            <person name="Ren S."/>
            <person name="Chen Z."/>
            <person name="Han Z."/>
        </authorList>
    </citation>
    <scope>NUCLEOTIDE SEQUENCE [MRNA] (ISOFORM 1)</scope>
    <scope>VARIANT ASP-762</scope>
    <source>
        <tissue>Adrenal gland</tissue>
    </source>
</reference>
<reference key="2">
    <citation type="journal article" date="2000" name="EMBO J.">
        <title>Vezatin, a novel transmembrane protein, bridges myosin VIIA to the cadherin-catenins complex.</title>
        <authorList>
            <person name="Kuessel-Andermann P."/>
            <person name="El-Amraoui A."/>
            <person name="Safieddine S."/>
            <person name="Nouaille S."/>
            <person name="Perfettini I."/>
            <person name="Lecuit M."/>
            <person name="Cossart P."/>
            <person name="Wolfrum U."/>
            <person name="Petit C."/>
        </authorList>
    </citation>
    <scope>NUCLEOTIDE SEQUENCE [MRNA] (ISOFORM 2)</scope>
    <scope>SUBUNIT</scope>
    <scope>VARIANT ILE-496</scope>
    <source>
        <tissue>Retina</tissue>
    </source>
</reference>
<reference key="3">
    <citation type="journal article" date="2004" name="Nat. Genet.">
        <title>Complete sequencing and characterization of 21,243 full-length human cDNAs.</title>
        <authorList>
            <person name="Ota T."/>
            <person name="Suzuki Y."/>
            <person name="Nishikawa T."/>
            <person name="Otsuki T."/>
            <person name="Sugiyama T."/>
            <person name="Irie R."/>
            <person name="Wakamatsu A."/>
            <person name="Hayashi K."/>
            <person name="Sato H."/>
            <person name="Nagai K."/>
            <person name="Kimura K."/>
            <person name="Makita H."/>
            <person name="Sekine M."/>
            <person name="Obayashi M."/>
            <person name="Nishi T."/>
            <person name="Shibahara T."/>
            <person name="Tanaka T."/>
            <person name="Ishii S."/>
            <person name="Yamamoto J."/>
            <person name="Saito K."/>
            <person name="Kawai Y."/>
            <person name="Isono Y."/>
            <person name="Nakamura Y."/>
            <person name="Nagahari K."/>
            <person name="Murakami K."/>
            <person name="Yasuda T."/>
            <person name="Iwayanagi T."/>
            <person name="Wagatsuma M."/>
            <person name="Shiratori A."/>
            <person name="Sudo H."/>
            <person name="Hosoiri T."/>
            <person name="Kaku Y."/>
            <person name="Kodaira H."/>
            <person name="Kondo H."/>
            <person name="Sugawara M."/>
            <person name="Takahashi M."/>
            <person name="Kanda K."/>
            <person name="Yokoi T."/>
            <person name="Furuya T."/>
            <person name="Kikkawa E."/>
            <person name="Omura Y."/>
            <person name="Abe K."/>
            <person name="Kamihara K."/>
            <person name="Katsuta N."/>
            <person name="Sato K."/>
            <person name="Tanikawa M."/>
            <person name="Yamazaki M."/>
            <person name="Ninomiya K."/>
            <person name="Ishibashi T."/>
            <person name="Yamashita H."/>
            <person name="Murakawa K."/>
            <person name="Fujimori K."/>
            <person name="Tanai H."/>
            <person name="Kimata M."/>
            <person name="Watanabe M."/>
            <person name="Hiraoka S."/>
            <person name="Chiba Y."/>
            <person name="Ishida S."/>
            <person name="Ono Y."/>
            <person name="Takiguchi S."/>
            <person name="Watanabe S."/>
            <person name="Yosida M."/>
            <person name="Hotuta T."/>
            <person name="Kusano J."/>
            <person name="Kanehori K."/>
            <person name="Takahashi-Fujii A."/>
            <person name="Hara H."/>
            <person name="Tanase T.-O."/>
            <person name="Nomura Y."/>
            <person name="Togiya S."/>
            <person name="Komai F."/>
            <person name="Hara R."/>
            <person name="Takeuchi K."/>
            <person name="Arita M."/>
            <person name="Imose N."/>
            <person name="Musashino K."/>
            <person name="Yuuki H."/>
            <person name="Oshima A."/>
            <person name="Sasaki N."/>
            <person name="Aotsuka S."/>
            <person name="Yoshikawa Y."/>
            <person name="Matsunawa H."/>
            <person name="Ichihara T."/>
            <person name="Shiohata N."/>
            <person name="Sano S."/>
            <person name="Moriya S."/>
            <person name="Momiyama H."/>
            <person name="Satoh N."/>
            <person name="Takami S."/>
            <person name="Terashima Y."/>
            <person name="Suzuki O."/>
            <person name="Nakagawa S."/>
            <person name="Senoh A."/>
            <person name="Mizoguchi H."/>
            <person name="Goto Y."/>
            <person name="Shimizu F."/>
            <person name="Wakebe H."/>
            <person name="Hishigaki H."/>
            <person name="Watanabe T."/>
            <person name="Sugiyama A."/>
            <person name="Takemoto M."/>
            <person name="Kawakami B."/>
            <person name="Yamazaki M."/>
            <person name="Watanabe K."/>
            <person name="Kumagai A."/>
            <person name="Itakura S."/>
            <person name="Fukuzumi Y."/>
            <person name="Fujimori Y."/>
            <person name="Komiyama M."/>
            <person name="Tashiro H."/>
            <person name="Tanigami A."/>
            <person name="Fujiwara T."/>
            <person name="Ono T."/>
            <person name="Yamada K."/>
            <person name="Fujii Y."/>
            <person name="Ozaki K."/>
            <person name="Hirao M."/>
            <person name="Ohmori Y."/>
            <person name="Kawabata A."/>
            <person name="Hikiji T."/>
            <person name="Kobatake N."/>
            <person name="Inagaki H."/>
            <person name="Ikema Y."/>
            <person name="Okamoto S."/>
            <person name="Okitani R."/>
            <person name="Kawakami T."/>
            <person name="Noguchi S."/>
            <person name="Itoh T."/>
            <person name="Shigeta K."/>
            <person name="Senba T."/>
            <person name="Matsumura K."/>
            <person name="Nakajima Y."/>
            <person name="Mizuno T."/>
            <person name="Morinaga M."/>
            <person name="Sasaki M."/>
            <person name="Togashi T."/>
            <person name="Oyama M."/>
            <person name="Hata H."/>
            <person name="Watanabe M."/>
            <person name="Komatsu T."/>
            <person name="Mizushima-Sugano J."/>
            <person name="Satoh T."/>
            <person name="Shirai Y."/>
            <person name="Takahashi Y."/>
            <person name="Nakagawa K."/>
            <person name="Okumura K."/>
            <person name="Nagase T."/>
            <person name="Nomura N."/>
            <person name="Kikuchi H."/>
            <person name="Masuho Y."/>
            <person name="Yamashita R."/>
            <person name="Nakai K."/>
            <person name="Yada T."/>
            <person name="Nakamura Y."/>
            <person name="Ohara O."/>
            <person name="Isogai T."/>
            <person name="Sugano S."/>
        </authorList>
    </citation>
    <scope>NUCLEOTIDE SEQUENCE [LARGE SCALE MRNA] (ISOFORM 5)</scope>
</reference>
<reference key="4">
    <citation type="journal article" date="2006" name="Nature">
        <title>The finished DNA sequence of human chromosome 12.</title>
        <authorList>
            <person name="Scherer S.E."/>
            <person name="Muzny D.M."/>
            <person name="Buhay C.J."/>
            <person name="Chen R."/>
            <person name="Cree A."/>
            <person name="Ding Y."/>
            <person name="Dugan-Rocha S."/>
            <person name="Gill R."/>
            <person name="Gunaratne P."/>
            <person name="Harris R.A."/>
            <person name="Hawes A.C."/>
            <person name="Hernandez J."/>
            <person name="Hodgson A.V."/>
            <person name="Hume J."/>
            <person name="Jackson A."/>
            <person name="Khan Z.M."/>
            <person name="Kovar-Smith C."/>
            <person name="Lewis L.R."/>
            <person name="Lozado R.J."/>
            <person name="Metzker M.L."/>
            <person name="Milosavljevic A."/>
            <person name="Miner G.R."/>
            <person name="Montgomery K.T."/>
            <person name="Morgan M.B."/>
            <person name="Nazareth L.V."/>
            <person name="Scott G."/>
            <person name="Sodergren E."/>
            <person name="Song X.-Z."/>
            <person name="Steffen D."/>
            <person name="Lovering R.C."/>
            <person name="Wheeler D.A."/>
            <person name="Worley K.C."/>
            <person name="Yuan Y."/>
            <person name="Zhang Z."/>
            <person name="Adams C.Q."/>
            <person name="Ansari-Lari M.A."/>
            <person name="Ayele M."/>
            <person name="Brown M.J."/>
            <person name="Chen G."/>
            <person name="Chen Z."/>
            <person name="Clerc-Blankenburg K.P."/>
            <person name="Davis C."/>
            <person name="Delgado O."/>
            <person name="Dinh H.H."/>
            <person name="Draper H."/>
            <person name="Gonzalez-Garay M.L."/>
            <person name="Havlak P."/>
            <person name="Jackson L.R."/>
            <person name="Jacob L.S."/>
            <person name="Kelly S.H."/>
            <person name="Li L."/>
            <person name="Li Z."/>
            <person name="Liu J."/>
            <person name="Liu W."/>
            <person name="Lu J."/>
            <person name="Maheshwari M."/>
            <person name="Nguyen B.-V."/>
            <person name="Okwuonu G.O."/>
            <person name="Pasternak S."/>
            <person name="Perez L.M."/>
            <person name="Plopper F.J.H."/>
            <person name="Santibanez J."/>
            <person name="Shen H."/>
            <person name="Tabor P.E."/>
            <person name="Verduzco D."/>
            <person name="Waldron L."/>
            <person name="Wang Q."/>
            <person name="Williams G.A."/>
            <person name="Zhang J."/>
            <person name="Zhou J."/>
            <person name="Allen C.C."/>
            <person name="Amin A.G."/>
            <person name="Anyalebechi V."/>
            <person name="Bailey M."/>
            <person name="Barbaria J.A."/>
            <person name="Bimage K.E."/>
            <person name="Bryant N.P."/>
            <person name="Burch P.E."/>
            <person name="Burkett C.E."/>
            <person name="Burrell K.L."/>
            <person name="Calderon E."/>
            <person name="Cardenas V."/>
            <person name="Carter K."/>
            <person name="Casias K."/>
            <person name="Cavazos I."/>
            <person name="Cavazos S.R."/>
            <person name="Ceasar H."/>
            <person name="Chacko J."/>
            <person name="Chan S.N."/>
            <person name="Chavez D."/>
            <person name="Christopoulos C."/>
            <person name="Chu J."/>
            <person name="Cockrell R."/>
            <person name="Cox C.D."/>
            <person name="Dang M."/>
            <person name="Dathorne S.R."/>
            <person name="David R."/>
            <person name="Davis C.M."/>
            <person name="Davy-Carroll L."/>
            <person name="Deshazo D.R."/>
            <person name="Donlin J.E."/>
            <person name="D'Souza L."/>
            <person name="Eaves K.A."/>
            <person name="Egan A."/>
            <person name="Emery-Cohen A.J."/>
            <person name="Escotto M."/>
            <person name="Flagg N."/>
            <person name="Forbes L.D."/>
            <person name="Gabisi A.M."/>
            <person name="Garza M."/>
            <person name="Hamilton C."/>
            <person name="Henderson N."/>
            <person name="Hernandez O."/>
            <person name="Hines S."/>
            <person name="Hogues M.E."/>
            <person name="Huang M."/>
            <person name="Idlebird D.G."/>
            <person name="Johnson R."/>
            <person name="Jolivet A."/>
            <person name="Jones S."/>
            <person name="Kagan R."/>
            <person name="King L.M."/>
            <person name="Leal B."/>
            <person name="Lebow H."/>
            <person name="Lee S."/>
            <person name="LeVan J.M."/>
            <person name="Lewis L.C."/>
            <person name="London P."/>
            <person name="Lorensuhewa L.M."/>
            <person name="Loulseged H."/>
            <person name="Lovett D.A."/>
            <person name="Lucier A."/>
            <person name="Lucier R.L."/>
            <person name="Ma J."/>
            <person name="Madu R.C."/>
            <person name="Mapua P."/>
            <person name="Martindale A.D."/>
            <person name="Martinez E."/>
            <person name="Massey E."/>
            <person name="Mawhiney S."/>
            <person name="Meador M.G."/>
            <person name="Mendez S."/>
            <person name="Mercado C."/>
            <person name="Mercado I.C."/>
            <person name="Merritt C.E."/>
            <person name="Miner Z.L."/>
            <person name="Minja E."/>
            <person name="Mitchell T."/>
            <person name="Mohabbat F."/>
            <person name="Mohabbat K."/>
            <person name="Montgomery B."/>
            <person name="Moore N."/>
            <person name="Morris S."/>
            <person name="Munidasa M."/>
            <person name="Ngo R.N."/>
            <person name="Nguyen N.B."/>
            <person name="Nickerson E."/>
            <person name="Nwaokelemeh O.O."/>
            <person name="Nwokenkwo S."/>
            <person name="Obregon M."/>
            <person name="Oguh M."/>
            <person name="Oragunye N."/>
            <person name="Oviedo R.J."/>
            <person name="Parish B.J."/>
            <person name="Parker D.N."/>
            <person name="Parrish J."/>
            <person name="Parks K.L."/>
            <person name="Paul H.A."/>
            <person name="Payton B.A."/>
            <person name="Perez A."/>
            <person name="Perrin W."/>
            <person name="Pickens A."/>
            <person name="Primus E.L."/>
            <person name="Pu L.-L."/>
            <person name="Puazo M."/>
            <person name="Quiles M.M."/>
            <person name="Quiroz J.B."/>
            <person name="Rabata D."/>
            <person name="Reeves K."/>
            <person name="Ruiz S.J."/>
            <person name="Shao H."/>
            <person name="Sisson I."/>
            <person name="Sonaike T."/>
            <person name="Sorelle R.P."/>
            <person name="Sutton A.E."/>
            <person name="Svatek A.F."/>
            <person name="Svetz L.A."/>
            <person name="Tamerisa K.S."/>
            <person name="Taylor T.R."/>
            <person name="Teague B."/>
            <person name="Thomas N."/>
            <person name="Thorn R.D."/>
            <person name="Trejos Z.Y."/>
            <person name="Trevino B.K."/>
            <person name="Ukegbu O.N."/>
            <person name="Urban J.B."/>
            <person name="Vasquez L.I."/>
            <person name="Vera V.A."/>
            <person name="Villasana D.M."/>
            <person name="Wang L."/>
            <person name="Ward-Moore S."/>
            <person name="Warren J.T."/>
            <person name="Wei X."/>
            <person name="White F."/>
            <person name="Williamson A.L."/>
            <person name="Wleczyk R."/>
            <person name="Wooden H.S."/>
            <person name="Wooden S.H."/>
            <person name="Yen J."/>
            <person name="Yoon L."/>
            <person name="Yoon V."/>
            <person name="Zorrilla S.E."/>
            <person name="Nelson D."/>
            <person name="Kucherlapati R."/>
            <person name="Weinstock G."/>
            <person name="Gibbs R.A."/>
        </authorList>
    </citation>
    <scope>NUCLEOTIDE SEQUENCE [LARGE SCALE GENOMIC DNA]</scope>
</reference>
<reference key="5">
    <citation type="journal article" date="2004" name="Genome Res.">
        <title>The status, quality, and expansion of the NIH full-length cDNA project: the Mammalian Gene Collection (MGC).</title>
        <authorList>
            <consortium name="The MGC Project Team"/>
        </authorList>
    </citation>
    <scope>NUCLEOTIDE SEQUENCE [LARGE SCALE MRNA] (ISOFORM 6)</scope>
    <source>
        <tissue>Skin</tissue>
    </source>
</reference>
<reference key="6">
    <citation type="journal article" date="2007" name="BMC Genomics">
        <title>The full-ORF clone resource of the German cDNA consortium.</title>
        <authorList>
            <person name="Bechtel S."/>
            <person name="Rosenfelder H."/>
            <person name="Duda A."/>
            <person name="Schmidt C.P."/>
            <person name="Ernst U."/>
            <person name="Wellenreuther R."/>
            <person name="Mehrle A."/>
            <person name="Schuster C."/>
            <person name="Bahr A."/>
            <person name="Bloecker H."/>
            <person name="Heubner D."/>
            <person name="Hoerlein A."/>
            <person name="Michel G."/>
            <person name="Wedler H."/>
            <person name="Koehrer K."/>
            <person name="Ottenwaelder B."/>
            <person name="Poustka A."/>
            <person name="Wiemann S."/>
            <person name="Schupp I."/>
        </authorList>
    </citation>
    <scope>NUCLEOTIDE SEQUENCE [LARGE SCALE MRNA] OF 1-610 (ISOFORM 2)</scope>
    <scope>NUCLEOTIDE SEQUENCE [LARGE SCALE MRNA] OF 391-779 (ISOFORM 1)</scope>
    <scope>VARIANTS MET-612 AND ASP-762</scope>
    <source>
        <tissue>Amygdala</tissue>
        <tissue>Testis</tissue>
    </source>
</reference>
<reference key="7">
    <citation type="journal article" date="2004" name="J. Cell Sci.">
        <title>Unconventional myosin VIIa and vezatin, two proteins crucial for Listeria entry into epithelial cells.</title>
        <authorList>
            <person name="Sousa S."/>
            <person name="Cabanes D."/>
            <person name="El-Amraoui A."/>
            <person name="Petit C."/>
            <person name="Lecuit M."/>
            <person name="Cossart P."/>
        </authorList>
    </citation>
    <scope>FUNCTION (MICROBIAL INFECTION)</scope>
    <scope>SUBCELLULAR LOCATION</scope>
</reference>
<accession>Q9HBM0</accession>
<accession>Q6P1Q3</accession>
<accession>Q9H2F4</accession>
<accession>Q9H2U5</accession>
<accession>Q9NT70</accession>
<accession>Q9NVW0</accession>
<accession>Q9UF91</accession>
<dbReference type="EMBL" id="AF225417">
    <property type="protein sequence ID" value="AAG09719.1"/>
    <property type="molecule type" value="mRNA"/>
</dbReference>
<dbReference type="EMBL" id="AF216644">
    <property type="protein sequence ID" value="AAG38485.1"/>
    <property type="molecule type" value="mRNA"/>
</dbReference>
<dbReference type="EMBL" id="AF277625">
    <property type="protein sequence ID" value="AAG38514.1"/>
    <property type="status" value="ALT_SEQ"/>
    <property type="molecule type" value="mRNA"/>
</dbReference>
<dbReference type="EMBL" id="AK001338">
    <property type="protein sequence ID" value="BAA91634.1"/>
    <property type="status" value="ALT_SEQ"/>
    <property type="molecule type" value="mRNA"/>
</dbReference>
<dbReference type="EMBL" id="AC084879">
    <property type="status" value="NOT_ANNOTATED_CDS"/>
    <property type="molecule type" value="Genomic_DNA"/>
</dbReference>
<dbReference type="EMBL" id="AC127165">
    <property type="status" value="NOT_ANNOTATED_CDS"/>
    <property type="molecule type" value="Genomic_DNA"/>
</dbReference>
<dbReference type="EMBL" id="BC064939">
    <property type="protein sequence ID" value="AAH64939.1"/>
    <property type="status" value="ALT_SEQ"/>
    <property type="molecule type" value="mRNA"/>
</dbReference>
<dbReference type="EMBL" id="AL133113">
    <property type="protein sequence ID" value="CAB61416.1"/>
    <property type="molecule type" value="mRNA"/>
</dbReference>
<dbReference type="EMBL" id="AL137497">
    <property type="protein sequence ID" value="CAB70772.2"/>
    <property type="status" value="ALT_SEQ"/>
    <property type="molecule type" value="mRNA"/>
</dbReference>
<dbReference type="CCDS" id="CCDS44954.1">
    <molecule id="Q9HBM0-1"/>
</dbReference>
<dbReference type="PIR" id="T46251">
    <property type="entry name" value="T46251"/>
</dbReference>
<dbReference type="RefSeq" id="NP_001339042.1">
    <molecule id="Q9HBM0-2"/>
    <property type="nucleotide sequence ID" value="NM_001352113.2"/>
</dbReference>
<dbReference type="RefSeq" id="NP_060069.3">
    <molecule id="Q9HBM0-1"/>
    <property type="nucleotide sequence ID" value="NM_017599.3"/>
</dbReference>
<dbReference type="RefSeq" id="XP_006719553.1">
    <property type="nucleotide sequence ID" value="XM_006719490.3"/>
</dbReference>
<dbReference type="RefSeq" id="XP_016875091.1">
    <property type="nucleotide sequence ID" value="XM_017019602.1"/>
</dbReference>
<dbReference type="SMR" id="Q9HBM0"/>
<dbReference type="BioGRID" id="120736">
    <property type="interactions" value="198"/>
</dbReference>
<dbReference type="FunCoup" id="Q9HBM0">
    <property type="interactions" value="2685"/>
</dbReference>
<dbReference type="IntAct" id="Q9HBM0">
    <property type="interactions" value="57"/>
</dbReference>
<dbReference type="MINT" id="Q9HBM0"/>
<dbReference type="STRING" id="9606.ENSP00000410083"/>
<dbReference type="TCDB" id="8.A.134.1.1">
    <property type="family name" value="the vezatin (vezatin) family"/>
</dbReference>
<dbReference type="GlyGen" id="Q9HBM0">
    <property type="glycosylation" value="1 site"/>
</dbReference>
<dbReference type="iPTMnet" id="Q9HBM0"/>
<dbReference type="PhosphoSitePlus" id="Q9HBM0"/>
<dbReference type="SwissPalm" id="Q9HBM0"/>
<dbReference type="BioMuta" id="VEZT"/>
<dbReference type="DMDM" id="224471870"/>
<dbReference type="jPOST" id="Q9HBM0"/>
<dbReference type="MassIVE" id="Q9HBM0"/>
<dbReference type="PaxDb" id="9606-ENSP00000410083"/>
<dbReference type="PeptideAtlas" id="Q9HBM0"/>
<dbReference type="ProteomicsDB" id="81573">
    <molecule id="Q9HBM0-1"/>
</dbReference>
<dbReference type="ProteomicsDB" id="81574">
    <molecule id="Q9HBM0-2"/>
</dbReference>
<dbReference type="ProteomicsDB" id="81575">
    <molecule id="Q9HBM0-5"/>
</dbReference>
<dbReference type="ProteomicsDB" id="81576">
    <molecule id="Q9HBM0-6"/>
</dbReference>
<dbReference type="Pumba" id="Q9HBM0"/>
<dbReference type="Antibodypedia" id="1345">
    <property type="antibodies" value="65 antibodies from 23 providers"/>
</dbReference>
<dbReference type="DNASU" id="55591"/>
<dbReference type="Ensembl" id="ENST00000436874.6">
    <molecule id="Q9HBM0-1"/>
    <property type="protein sequence ID" value="ENSP00000410083.1"/>
    <property type="gene ID" value="ENSG00000028203.19"/>
</dbReference>
<dbReference type="Ensembl" id="ENST00000546557.5">
    <molecule id="Q9HBM0-6"/>
    <property type="protein sequence ID" value="ENSP00000447080.1"/>
    <property type="gene ID" value="ENSG00000028203.19"/>
</dbReference>
<dbReference type="Ensembl" id="ENST00000547484.5">
    <molecule id="Q9HBM0-6"/>
    <property type="protein sequence ID" value="ENSP00000447010.1"/>
    <property type="gene ID" value="ENSG00000028203.19"/>
</dbReference>
<dbReference type="Ensembl" id="ENST00000547997.5">
    <molecule id="Q9HBM0-6"/>
    <property type="protein sequence ID" value="ENSP00000449346.1"/>
    <property type="gene ID" value="ENSG00000028203.19"/>
</dbReference>
<dbReference type="Ensembl" id="ENST00000548455.5">
    <molecule id="Q9HBM0-6"/>
    <property type="protein sequence ID" value="ENSP00000447044.1"/>
    <property type="gene ID" value="ENSG00000028203.19"/>
</dbReference>
<dbReference type="Ensembl" id="ENST00000549624.5">
    <molecule id="Q9HBM0-6"/>
    <property type="protein sequence ID" value="ENSP00000448555.1"/>
    <property type="gene ID" value="ENSG00000028203.19"/>
</dbReference>
<dbReference type="Ensembl" id="ENST00000550803.5">
    <molecule id="Q9HBM0-6"/>
    <property type="protein sequence ID" value="ENSP00000449056.1"/>
    <property type="gene ID" value="ENSG00000028203.19"/>
</dbReference>
<dbReference type="Ensembl" id="ENST00000552660.5">
    <molecule id="Q9HBM0-6"/>
    <property type="protein sequence ID" value="ENSP00000447786.1"/>
    <property type="gene ID" value="ENSG00000028203.19"/>
</dbReference>
<dbReference type="GeneID" id="55591"/>
<dbReference type="KEGG" id="hsa:55591"/>
<dbReference type="MANE-Select" id="ENST00000436874.6">
    <property type="protein sequence ID" value="ENSP00000410083.1"/>
    <property type="RefSeq nucleotide sequence ID" value="NM_017599.4"/>
    <property type="RefSeq protein sequence ID" value="NP_060069.3"/>
</dbReference>
<dbReference type="UCSC" id="uc001tdz.2">
    <molecule id="Q9HBM0-1"/>
    <property type="organism name" value="human"/>
</dbReference>
<dbReference type="AGR" id="HGNC:18258"/>
<dbReference type="CTD" id="55591"/>
<dbReference type="DisGeNET" id="55591"/>
<dbReference type="GeneCards" id="VEZT"/>
<dbReference type="HGNC" id="HGNC:18258">
    <property type="gene designation" value="VEZT"/>
</dbReference>
<dbReference type="HPA" id="ENSG00000028203">
    <property type="expression patterns" value="Low tissue specificity"/>
</dbReference>
<dbReference type="MIM" id="619749">
    <property type="type" value="gene"/>
</dbReference>
<dbReference type="neXtProt" id="NX_Q9HBM0"/>
<dbReference type="OpenTargets" id="ENSG00000028203"/>
<dbReference type="PharmGKB" id="PA143485667"/>
<dbReference type="VEuPathDB" id="HostDB:ENSG00000028203"/>
<dbReference type="eggNOG" id="ENOG502QTQW">
    <property type="taxonomic scope" value="Eukaryota"/>
</dbReference>
<dbReference type="GeneTree" id="ENSGT00390000003290"/>
<dbReference type="InParanoid" id="Q9HBM0"/>
<dbReference type="OMA" id="IVCENPR"/>
<dbReference type="OrthoDB" id="21151at2759"/>
<dbReference type="PAN-GO" id="Q9HBM0">
    <property type="GO annotations" value="2 GO annotations based on evolutionary models"/>
</dbReference>
<dbReference type="PhylomeDB" id="Q9HBM0"/>
<dbReference type="TreeFam" id="TF332269"/>
<dbReference type="PathwayCommons" id="Q9HBM0"/>
<dbReference type="SignaLink" id="Q9HBM0"/>
<dbReference type="BioGRID-ORCS" id="55591">
    <property type="hits" value="354 hits in 1160 CRISPR screens"/>
</dbReference>
<dbReference type="ChiTaRS" id="VEZT">
    <property type="organism name" value="human"/>
</dbReference>
<dbReference type="GeneWiki" id="VEZT"/>
<dbReference type="GenomeRNAi" id="55591"/>
<dbReference type="Pharos" id="Q9HBM0">
    <property type="development level" value="Tbio"/>
</dbReference>
<dbReference type="PRO" id="PR:Q9HBM0"/>
<dbReference type="Proteomes" id="UP000005640">
    <property type="component" value="Chromosome 12"/>
</dbReference>
<dbReference type="RNAct" id="Q9HBM0">
    <property type="molecule type" value="protein"/>
</dbReference>
<dbReference type="Bgee" id="ENSG00000028203">
    <property type="expression patterns" value="Expressed in adrenal tissue and 192 other cell types or tissues"/>
</dbReference>
<dbReference type="ExpressionAtlas" id="Q9HBM0">
    <property type="expression patterns" value="baseline and differential"/>
</dbReference>
<dbReference type="GO" id="GO:0001669">
    <property type="term" value="C:acrosomal vesicle"/>
    <property type="evidence" value="ECO:0007669"/>
    <property type="project" value="UniProtKB-SubCell"/>
</dbReference>
<dbReference type="GO" id="GO:0005912">
    <property type="term" value="C:adherens junction"/>
    <property type="evidence" value="ECO:0007669"/>
    <property type="project" value="UniProtKB-SubCell"/>
</dbReference>
<dbReference type="GO" id="GO:0005829">
    <property type="term" value="C:cytosol"/>
    <property type="evidence" value="ECO:0000314"/>
    <property type="project" value="HPA"/>
</dbReference>
<dbReference type="GO" id="GO:0005654">
    <property type="term" value="C:nucleoplasm"/>
    <property type="evidence" value="ECO:0000314"/>
    <property type="project" value="HPA"/>
</dbReference>
<dbReference type="GO" id="GO:0005886">
    <property type="term" value="C:plasma membrane"/>
    <property type="evidence" value="ECO:0000318"/>
    <property type="project" value="GO_Central"/>
</dbReference>
<dbReference type="GO" id="GO:0002142">
    <property type="term" value="C:stereocilia ankle link complex"/>
    <property type="evidence" value="ECO:0000250"/>
    <property type="project" value="UniProtKB"/>
</dbReference>
<dbReference type="GO" id="GO:0060171">
    <property type="term" value="C:stereocilium membrane"/>
    <property type="evidence" value="ECO:0007669"/>
    <property type="project" value="UniProtKB-SubCell"/>
</dbReference>
<dbReference type="GO" id="GO:0017022">
    <property type="term" value="F:myosin binding"/>
    <property type="evidence" value="ECO:0007669"/>
    <property type="project" value="InterPro"/>
</dbReference>
<dbReference type="GO" id="GO:0098609">
    <property type="term" value="P:cell-cell adhesion"/>
    <property type="evidence" value="ECO:0000318"/>
    <property type="project" value="GO_Central"/>
</dbReference>
<dbReference type="InterPro" id="IPR026859">
    <property type="entry name" value="Myosin-bd"/>
</dbReference>
<dbReference type="InterPro" id="IPR026858">
    <property type="entry name" value="Vezatin"/>
</dbReference>
<dbReference type="PANTHER" id="PTHR15989">
    <property type="entry name" value="VEZATIN"/>
    <property type="match status" value="1"/>
</dbReference>
<dbReference type="PANTHER" id="PTHR15989:SF5">
    <property type="entry name" value="VEZATIN"/>
    <property type="match status" value="1"/>
</dbReference>
<dbReference type="Pfam" id="PF12632">
    <property type="entry name" value="Vezatin"/>
    <property type="match status" value="1"/>
</dbReference>
<keyword id="KW-0025">Alternative splicing</keyword>
<keyword id="KW-0965">Cell junction</keyword>
<keyword id="KW-1003">Cell membrane</keyword>
<keyword id="KW-0966">Cell projection</keyword>
<keyword id="KW-0175">Coiled coil</keyword>
<keyword id="KW-0968">Cytoplasmic vesicle</keyword>
<keyword id="KW-0472">Membrane</keyword>
<keyword id="KW-0539">Nucleus</keyword>
<keyword id="KW-1267">Proteomics identification</keyword>
<keyword id="KW-1185">Reference proteome</keyword>
<keyword id="KW-0812">Transmembrane</keyword>
<keyword id="KW-1133">Transmembrane helix</keyword>
<gene>
    <name type="primary">VEZT</name>
</gene>
<proteinExistence type="evidence at protein level"/>
<organism>
    <name type="scientific">Homo sapiens</name>
    <name type="common">Human</name>
    <dbReference type="NCBI Taxonomy" id="9606"/>
    <lineage>
        <taxon>Eukaryota</taxon>
        <taxon>Metazoa</taxon>
        <taxon>Chordata</taxon>
        <taxon>Craniata</taxon>
        <taxon>Vertebrata</taxon>
        <taxon>Euteleostomi</taxon>
        <taxon>Mammalia</taxon>
        <taxon>Eutheria</taxon>
        <taxon>Euarchontoglires</taxon>
        <taxon>Primates</taxon>
        <taxon>Haplorrhini</taxon>
        <taxon>Catarrhini</taxon>
        <taxon>Hominidae</taxon>
        <taxon>Homo</taxon>
    </lineage>
</organism>
<evidence type="ECO:0000250" key="1">
    <source>
        <dbReference type="UniProtKB" id="Q3ZK22"/>
    </source>
</evidence>
<evidence type="ECO:0000255" key="2"/>
<evidence type="ECO:0000256" key="3">
    <source>
        <dbReference type="SAM" id="MobiDB-lite"/>
    </source>
</evidence>
<evidence type="ECO:0000269" key="4">
    <source>
    </source>
</evidence>
<evidence type="ECO:0000269" key="5">
    <source>
    </source>
</evidence>
<evidence type="ECO:0000269" key="6">
    <source>
    </source>
</evidence>
<evidence type="ECO:0000269" key="7">
    <source ref="1"/>
</evidence>
<evidence type="ECO:0000303" key="8">
    <source>
    </source>
</evidence>
<evidence type="ECO:0000303" key="9">
    <source>
    </source>
</evidence>
<evidence type="ECO:0000303" key="10">
    <source>
    </source>
</evidence>
<evidence type="ECO:0000303" key="11">
    <source>
    </source>
</evidence>
<evidence type="ECO:0000305" key="12"/>